<sequence>MKILVLNSGSSSIKFKFFDNKIVKASGLVEKIGEQNSKVVLKNTLNNESFERELTINNHEEGLSIVNELFKESGILADLNALDGCGHRIVHGGRNLSEHCLVDDYVLKEIDRVSIFAPLHNPAHLAGIKTMIKAAPSVANAAIFDTAFHRTMPDFAYMYALPYDFYDKHNIRRYGFHGTSHAYVSSRAAKFLQKDQNELNVISAHLGNGASVCAIEKGKSMDTSMGFTPLEGLIMGTRCGDLDPAILPFVSHLKGLTIEEIDTLMNKKSGVYGICGYNDFRDIEREIEQGNDKARLALDMFCYRLVKYIGSYFAVLPKTDAIIFTGGIGENDSLVRQKVCERLAHLGIELDFELNKQRISGERMINHANSKLKVLVIPTDEELEIARITEELIGKN</sequence>
<gene>
    <name evidence="1" type="primary">ackA</name>
    <name type="ordered locus">CJE0788</name>
</gene>
<keyword id="KW-0067">ATP-binding</keyword>
<keyword id="KW-0963">Cytoplasm</keyword>
<keyword id="KW-0418">Kinase</keyword>
<keyword id="KW-0460">Magnesium</keyword>
<keyword id="KW-0479">Metal-binding</keyword>
<keyword id="KW-0547">Nucleotide-binding</keyword>
<keyword id="KW-0808">Transferase</keyword>
<comment type="function">
    <text evidence="1">Catalyzes the formation of acetyl phosphate from acetate and ATP. Can also catalyze the reverse reaction.</text>
</comment>
<comment type="catalytic activity">
    <reaction evidence="1">
        <text>acetate + ATP = acetyl phosphate + ADP</text>
        <dbReference type="Rhea" id="RHEA:11352"/>
        <dbReference type="ChEBI" id="CHEBI:22191"/>
        <dbReference type="ChEBI" id="CHEBI:30089"/>
        <dbReference type="ChEBI" id="CHEBI:30616"/>
        <dbReference type="ChEBI" id="CHEBI:456216"/>
        <dbReference type="EC" id="2.7.2.1"/>
    </reaction>
</comment>
<comment type="cofactor">
    <cofactor evidence="1">
        <name>Mg(2+)</name>
        <dbReference type="ChEBI" id="CHEBI:18420"/>
    </cofactor>
    <cofactor evidence="1">
        <name>Mn(2+)</name>
        <dbReference type="ChEBI" id="CHEBI:29035"/>
    </cofactor>
    <text evidence="1">Mg(2+). Can also accept Mn(2+).</text>
</comment>
<comment type="pathway">
    <text evidence="1">Metabolic intermediate biosynthesis; acetyl-CoA biosynthesis; acetyl-CoA from acetate: step 1/2.</text>
</comment>
<comment type="subunit">
    <text evidence="1">Homodimer.</text>
</comment>
<comment type="subcellular location">
    <subcellularLocation>
        <location evidence="1">Cytoplasm</location>
    </subcellularLocation>
</comment>
<comment type="similarity">
    <text evidence="1">Belongs to the acetokinase family.</text>
</comment>
<evidence type="ECO:0000255" key="1">
    <source>
        <dbReference type="HAMAP-Rule" id="MF_00020"/>
    </source>
</evidence>
<proteinExistence type="inferred from homology"/>
<feature type="chain" id="PRO_0000107542" description="Acetate kinase">
    <location>
        <begin position="1"/>
        <end position="396"/>
    </location>
</feature>
<feature type="active site" description="Proton donor/acceptor" evidence="1">
    <location>
        <position position="145"/>
    </location>
</feature>
<feature type="binding site" evidence="1">
    <location>
        <position position="7"/>
    </location>
    <ligand>
        <name>Mg(2+)</name>
        <dbReference type="ChEBI" id="CHEBI:18420"/>
    </ligand>
</feature>
<feature type="binding site" evidence="1">
    <location>
        <position position="14"/>
    </location>
    <ligand>
        <name>ATP</name>
        <dbReference type="ChEBI" id="CHEBI:30616"/>
    </ligand>
</feature>
<feature type="binding site" evidence="1">
    <location>
        <position position="88"/>
    </location>
    <ligand>
        <name>substrate</name>
    </ligand>
</feature>
<feature type="binding site" evidence="1">
    <location>
        <begin position="205"/>
        <end position="209"/>
    </location>
    <ligand>
        <name>ATP</name>
        <dbReference type="ChEBI" id="CHEBI:30616"/>
    </ligand>
</feature>
<feature type="binding site" evidence="1">
    <location>
        <begin position="279"/>
        <end position="281"/>
    </location>
    <ligand>
        <name>ATP</name>
        <dbReference type="ChEBI" id="CHEBI:30616"/>
    </ligand>
</feature>
<feature type="binding site" evidence="1">
    <location>
        <begin position="327"/>
        <end position="331"/>
    </location>
    <ligand>
        <name>ATP</name>
        <dbReference type="ChEBI" id="CHEBI:30616"/>
    </ligand>
</feature>
<feature type="binding site" evidence="1">
    <location>
        <position position="381"/>
    </location>
    <ligand>
        <name>Mg(2+)</name>
        <dbReference type="ChEBI" id="CHEBI:18420"/>
    </ligand>
</feature>
<feature type="site" description="Transition state stabilizer" evidence="1">
    <location>
        <position position="177"/>
    </location>
</feature>
<feature type="site" description="Transition state stabilizer" evidence="1">
    <location>
        <position position="238"/>
    </location>
</feature>
<protein>
    <recommendedName>
        <fullName evidence="1">Acetate kinase</fullName>
        <ecNumber evidence="1">2.7.2.1</ecNumber>
    </recommendedName>
    <alternativeName>
        <fullName evidence="1">Acetokinase</fullName>
    </alternativeName>
</protein>
<organism>
    <name type="scientific">Campylobacter jejuni (strain RM1221)</name>
    <dbReference type="NCBI Taxonomy" id="195099"/>
    <lineage>
        <taxon>Bacteria</taxon>
        <taxon>Pseudomonadati</taxon>
        <taxon>Campylobacterota</taxon>
        <taxon>Epsilonproteobacteria</taxon>
        <taxon>Campylobacterales</taxon>
        <taxon>Campylobacteraceae</taxon>
        <taxon>Campylobacter</taxon>
    </lineage>
</organism>
<accession>Q5HV92</accession>
<name>ACKA_CAMJR</name>
<reference key="1">
    <citation type="journal article" date="2005" name="PLoS Biol.">
        <title>Major structural differences and novel potential virulence mechanisms from the genomes of multiple Campylobacter species.</title>
        <authorList>
            <person name="Fouts D.E."/>
            <person name="Mongodin E.F."/>
            <person name="Mandrell R.E."/>
            <person name="Miller W.G."/>
            <person name="Rasko D.A."/>
            <person name="Ravel J."/>
            <person name="Brinkac L.M."/>
            <person name="DeBoy R.T."/>
            <person name="Parker C.T."/>
            <person name="Daugherty S.C."/>
            <person name="Dodson R.J."/>
            <person name="Durkin A.S."/>
            <person name="Madupu R."/>
            <person name="Sullivan S.A."/>
            <person name="Shetty J.U."/>
            <person name="Ayodeji M.A."/>
            <person name="Shvartsbeyn A."/>
            <person name="Schatz M.C."/>
            <person name="Badger J.H."/>
            <person name="Fraser C.M."/>
            <person name="Nelson K.E."/>
        </authorList>
    </citation>
    <scope>NUCLEOTIDE SEQUENCE [LARGE SCALE GENOMIC DNA]</scope>
    <source>
        <strain>RM1221</strain>
    </source>
</reference>
<dbReference type="EC" id="2.7.2.1" evidence="1"/>
<dbReference type="EMBL" id="CP000025">
    <property type="protein sequence ID" value="AAW34575.1"/>
    <property type="molecule type" value="Genomic_DNA"/>
</dbReference>
<dbReference type="RefSeq" id="WP_002864740.1">
    <property type="nucleotide sequence ID" value="NC_003912.7"/>
</dbReference>
<dbReference type="SMR" id="Q5HV92"/>
<dbReference type="KEGG" id="cjr:CJE0788"/>
<dbReference type="HOGENOM" id="CLU_020352_0_1_7"/>
<dbReference type="UniPathway" id="UPA00340">
    <property type="reaction ID" value="UER00458"/>
</dbReference>
<dbReference type="GO" id="GO:0005737">
    <property type="term" value="C:cytoplasm"/>
    <property type="evidence" value="ECO:0007669"/>
    <property type="project" value="UniProtKB-SubCell"/>
</dbReference>
<dbReference type="GO" id="GO:0008776">
    <property type="term" value="F:acetate kinase activity"/>
    <property type="evidence" value="ECO:0007669"/>
    <property type="project" value="UniProtKB-UniRule"/>
</dbReference>
<dbReference type="GO" id="GO:0005524">
    <property type="term" value="F:ATP binding"/>
    <property type="evidence" value="ECO:0007669"/>
    <property type="project" value="UniProtKB-KW"/>
</dbReference>
<dbReference type="GO" id="GO:0000287">
    <property type="term" value="F:magnesium ion binding"/>
    <property type="evidence" value="ECO:0007669"/>
    <property type="project" value="UniProtKB-UniRule"/>
</dbReference>
<dbReference type="GO" id="GO:0006083">
    <property type="term" value="P:acetate metabolic process"/>
    <property type="evidence" value="ECO:0007669"/>
    <property type="project" value="TreeGrafter"/>
</dbReference>
<dbReference type="GO" id="GO:0006085">
    <property type="term" value="P:acetyl-CoA biosynthetic process"/>
    <property type="evidence" value="ECO:0007669"/>
    <property type="project" value="UniProtKB-UniRule"/>
</dbReference>
<dbReference type="CDD" id="cd24010">
    <property type="entry name" value="ASKHA_NBD_AcK_PK"/>
    <property type="match status" value="1"/>
</dbReference>
<dbReference type="Gene3D" id="3.30.420.40">
    <property type="match status" value="2"/>
</dbReference>
<dbReference type="HAMAP" id="MF_00020">
    <property type="entry name" value="Acetate_kinase"/>
    <property type="match status" value="1"/>
</dbReference>
<dbReference type="InterPro" id="IPR004372">
    <property type="entry name" value="Ac/propionate_kinase"/>
</dbReference>
<dbReference type="InterPro" id="IPR000890">
    <property type="entry name" value="Aliphatic_acid_kin_short-chain"/>
</dbReference>
<dbReference type="InterPro" id="IPR023865">
    <property type="entry name" value="Aliphatic_acid_kinase_CS"/>
</dbReference>
<dbReference type="InterPro" id="IPR043129">
    <property type="entry name" value="ATPase_NBD"/>
</dbReference>
<dbReference type="NCBIfam" id="TIGR00016">
    <property type="entry name" value="ackA"/>
    <property type="match status" value="1"/>
</dbReference>
<dbReference type="PANTHER" id="PTHR21060">
    <property type="entry name" value="ACETATE KINASE"/>
    <property type="match status" value="1"/>
</dbReference>
<dbReference type="PANTHER" id="PTHR21060:SF15">
    <property type="entry name" value="ACETATE KINASE-RELATED"/>
    <property type="match status" value="1"/>
</dbReference>
<dbReference type="Pfam" id="PF00871">
    <property type="entry name" value="Acetate_kinase"/>
    <property type="match status" value="1"/>
</dbReference>
<dbReference type="PIRSF" id="PIRSF000722">
    <property type="entry name" value="Acetate_prop_kin"/>
    <property type="match status" value="1"/>
</dbReference>
<dbReference type="PRINTS" id="PR00471">
    <property type="entry name" value="ACETATEKNASE"/>
</dbReference>
<dbReference type="SUPFAM" id="SSF53067">
    <property type="entry name" value="Actin-like ATPase domain"/>
    <property type="match status" value="2"/>
</dbReference>
<dbReference type="PROSITE" id="PS01075">
    <property type="entry name" value="ACETATE_KINASE_1"/>
    <property type="match status" value="1"/>
</dbReference>
<dbReference type="PROSITE" id="PS01076">
    <property type="entry name" value="ACETATE_KINASE_2"/>
    <property type="match status" value="1"/>
</dbReference>